<organism>
    <name type="scientific">Leptospira interrogans serogroup Icterohaemorrhagiae serovar copenhageni (strain Fiocruz L1-130)</name>
    <dbReference type="NCBI Taxonomy" id="267671"/>
    <lineage>
        <taxon>Bacteria</taxon>
        <taxon>Pseudomonadati</taxon>
        <taxon>Spirochaetota</taxon>
        <taxon>Spirochaetia</taxon>
        <taxon>Leptospirales</taxon>
        <taxon>Leptospiraceae</taxon>
        <taxon>Leptospira</taxon>
    </lineage>
</organism>
<gene>
    <name evidence="1" type="primary">nuoB</name>
    <name type="ordered locus">LIC_12742</name>
</gene>
<dbReference type="EC" id="7.1.1.-" evidence="1"/>
<dbReference type="EMBL" id="AE016823">
    <property type="protein sequence ID" value="AAS71299.1"/>
    <property type="molecule type" value="Genomic_DNA"/>
</dbReference>
<dbReference type="RefSeq" id="WP_000524416.1">
    <property type="nucleotide sequence ID" value="NC_005823.1"/>
</dbReference>
<dbReference type="SMR" id="Q72NT7"/>
<dbReference type="KEGG" id="lic:LIC_12742"/>
<dbReference type="HOGENOM" id="CLU_055737_7_3_12"/>
<dbReference type="Proteomes" id="UP000007037">
    <property type="component" value="Chromosome I"/>
</dbReference>
<dbReference type="GO" id="GO:0005886">
    <property type="term" value="C:plasma membrane"/>
    <property type="evidence" value="ECO:0007669"/>
    <property type="project" value="UniProtKB-SubCell"/>
</dbReference>
<dbReference type="GO" id="GO:0045271">
    <property type="term" value="C:respiratory chain complex I"/>
    <property type="evidence" value="ECO:0007669"/>
    <property type="project" value="TreeGrafter"/>
</dbReference>
<dbReference type="GO" id="GO:0051539">
    <property type="term" value="F:4 iron, 4 sulfur cluster binding"/>
    <property type="evidence" value="ECO:0007669"/>
    <property type="project" value="UniProtKB-KW"/>
</dbReference>
<dbReference type="GO" id="GO:0005506">
    <property type="term" value="F:iron ion binding"/>
    <property type="evidence" value="ECO:0007669"/>
    <property type="project" value="UniProtKB-UniRule"/>
</dbReference>
<dbReference type="GO" id="GO:0008137">
    <property type="term" value="F:NADH dehydrogenase (ubiquinone) activity"/>
    <property type="evidence" value="ECO:0007669"/>
    <property type="project" value="InterPro"/>
</dbReference>
<dbReference type="GO" id="GO:0050136">
    <property type="term" value="F:NADH:ubiquinone reductase (non-electrogenic) activity"/>
    <property type="evidence" value="ECO:0007669"/>
    <property type="project" value="UniProtKB-UniRule"/>
</dbReference>
<dbReference type="GO" id="GO:0048038">
    <property type="term" value="F:quinone binding"/>
    <property type="evidence" value="ECO:0007669"/>
    <property type="project" value="UniProtKB-KW"/>
</dbReference>
<dbReference type="GO" id="GO:0009060">
    <property type="term" value="P:aerobic respiration"/>
    <property type="evidence" value="ECO:0007669"/>
    <property type="project" value="TreeGrafter"/>
</dbReference>
<dbReference type="GO" id="GO:0015990">
    <property type="term" value="P:electron transport coupled proton transport"/>
    <property type="evidence" value="ECO:0007669"/>
    <property type="project" value="TreeGrafter"/>
</dbReference>
<dbReference type="FunFam" id="3.40.50.12280:FF:000002">
    <property type="entry name" value="NADH-quinone oxidoreductase subunit B"/>
    <property type="match status" value="1"/>
</dbReference>
<dbReference type="Gene3D" id="3.40.50.12280">
    <property type="match status" value="1"/>
</dbReference>
<dbReference type="HAMAP" id="MF_01356">
    <property type="entry name" value="NDH1_NuoB"/>
    <property type="match status" value="1"/>
</dbReference>
<dbReference type="InterPro" id="IPR006137">
    <property type="entry name" value="NADH_UbQ_OxRdtase-like_20kDa"/>
</dbReference>
<dbReference type="InterPro" id="IPR006138">
    <property type="entry name" value="NADH_UQ_OxRdtase_20Kd_su"/>
</dbReference>
<dbReference type="NCBIfam" id="TIGR01957">
    <property type="entry name" value="nuoB_fam"/>
    <property type="match status" value="1"/>
</dbReference>
<dbReference type="NCBIfam" id="NF005012">
    <property type="entry name" value="PRK06411.1"/>
    <property type="match status" value="1"/>
</dbReference>
<dbReference type="NCBIfam" id="NF011389">
    <property type="entry name" value="PRK14814.1"/>
    <property type="match status" value="1"/>
</dbReference>
<dbReference type="PANTHER" id="PTHR11995">
    <property type="entry name" value="NADH DEHYDROGENASE"/>
    <property type="match status" value="1"/>
</dbReference>
<dbReference type="PANTHER" id="PTHR11995:SF14">
    <property type="entry name" value="NADH DEHYDROGENASE [UBIQUINONE] IRON-SULFUR PROTEIN 7, MITOCHONDRIAL"/>
    <property type="match status" value="1"/>
</dbReference>
<dbReference type="Pfam" id="PF01058">
    <property type="entry name" value="Oxidored_q6"/>
    <property type="match status" value="1"/>
</dbReference>
<dbReference type="SUPFAM" id="SSF56770">
    <property type="entry name" value="HydA/Nqo6-like"/>
    <property type="match status" value="1"/>
</dbReference>
<dbReference type="PROSITE" id="PS01150">
    <property type="entry name" value="COMPLEX1_20K"/>
    <property type="match status" value="1"/>
</dbReference>
<evidence type="ECO:0000255" key="1">
    <source>
        <dbReference type="HAMAP-Rule" id="MF_01356"/>
    </source>
</evidence>
<sequence length="186" mass="20578">MGLSDLSKTPGQALGDMVQLGNVESVIQWGRSYSLWPYPFATACCGIEYMSTACSDYDIARFGAERPSFSPRQADMILVLGTITYKMAPVLRQIYDQMAEPKFVISVGACASSGGMFHTYGVLQGVDRILPVDVYVPGCPPRPEAILDALLKLQTKLKTQGLEARRQEVMQKIQELNERNKPLVVR</sequence>
<comment type="function">
    <text evidence="1">NDH-1 shuttles electrons from NADH, via FMN and iron-sulfur (Fe-S) centers, to quinones in the respiratory chain. The immediate electron acceptor for the enzyme in this species is believed to be ubiquinone. Couples the redox reaction to proton translocation (for every two electrons transferred, four hydrogen ions are translocated across the cytoplasmic membrane), and thus conserves the redox energy in a proton gradient.</text>
</comment>
<comment type="catalytic activity">
    <reaction evidence="1">
        <text>a quinone + NADH + 5 H(+)(in) = a quinol + NAD(+) + 4 H(+)(out)</text>
        <dbReference type="Rhea" id="RHEA:57888"/>
        <dbReference type="ChEBI" id="CHEBI:15378"/>
        <dbReference type="ChEBI" id="CHEBI:24646"/>
        <dbReference type="ChEBI" id="CHEBI:57540"/>
        <dbReference type="ChEBI" id="CHEBI:57945"/>
        <dbReference type="ChEBI" id="CHEBI:132124"/>
    </reaction>
</comment>
<comment type="cofactor">
    <cofactor evidence="1">
        <name>[4Fe-4S] cluster</name>
        <dbReference type="ChEBI" id="CHEBI:49883"/>
    </cofactor>
    <text evidence="1">Binds 1 [4Fe-4S] cluster.</text>
</comment>
<comment type="subunit">
    <text evidence="1">NDH-1 is composed of 14 different subunits. Subunits NuoB, C, D, E, F, and G constitute the peripheral sector of the complex.</text>
</comment>
<comment type="subcellular location">
    <subcellularLocation>
        <location evidence="1">Cell inner membrane</location>
        <topology evidence="1">Peripheral membrane protein</topology>
        <orientation evidence="1">Cytoplasmic side</orientation>
    </subcellularLocation>
</comment>
<comment type="similarity">
    <text evidence="1">Belongs to the complex I 20 kDa subunit family.</text>
</comment>
<name>NUOB_LEPIC</name>
<feature type="chain" id="PRO_0000376264" description="NADH-quinone oxidoreductase subunit B">
    <location>
        <begin position="1"/>
        <end position="186"/>
    </location>
</feature>
<feature type="binding site" evidence="1">
    <location>
        <position position="44"/>
    </location>
    <ligand>
        <name>[4Fe-4S] cluster</name>
        <dbReference type="ChEBI" id="CHEBI:49883"/>
    </ligand>
</feature>
<feature type="binding site" evidence="1">
    <location>
        <position position="45"/>
    </location>
    <ligand>
        <name>[4Fe-4S] cluster</name>
        <dbReference type="ChEBI" id="CHEBI:49883"/>
    </ligand>
</feature>
<feature type="binding site" evidence="1">
    <location>
        <position position="110"/>
    </location>
    <ligand>
        <name>[4Fe-4S] cluster</name>
        <dbReference type="ChEBI" id="CHEBI:49883"/>
    </ligand>
</feature>
<feature type="binding site" evidence="1">
    <location>
        <position position="139"/>
    </location>
    <ligand>
        <name>[4Fe-4S] cluster</name>
        <dbReference type="ChEBI" id="CHEBI:49883"/>
    </ligand>
</feature>
<accession>Q72NT7</accession>
<keyword id="KW-0004">4Fe-4S</keyword>
<keyword id="KW-0997">Cell inner membrane</keyword>
<keyword id="KW-1003">Cell membrane</keyword>
<keyword id="KW-0408">Iron</keyword>
<keyword id="KW-0411">Iron-sulfur</keyword>
<keyword id="KW-0472">Membrane</keyword>
<keyword id="KW-0479">Metal-binding</keyword>
<keyword id="KW-0520">NAD</keyword>
<keyword id="KW-0874">Quinone</keyword>
<keyword id="KW-1278">Translocase</keyword>
<keyword id="KW-0813">Transport</keyword>
<keyword id="KW-0830">Ubiquinone</keyword>
<proteinExistence type="inferred from homology"/>
<reference key="1">
    <citation type="journal article" date="2004" name="J. Bacteriol.">
        <title>Comparative genomics of two Leptospira interrogans serovars reveals novel insights into physiology and pathogenesis.</title>
        <authorList>
            <person name="Nascimento A.L.T.O."/>
            <person name="Ko A.I."/>
            <person name="Martins E.A.L."/>
            <person name="Monteiro-Vitorello C.B."/>
            <person name="Ho P.L."/>
            <person name="Haake D.A."/>
            <person name="Verjovski-Almeida S."/>
            <person name="Hartskeerl R.A."/>
            <person name="Marques M.V."/>
            <person name="Oliveira M.C."/>
            <person name="Menck C.F.M."/>
            <person name="Leite L.C.C."/>
            <person name="Carrer H."/>
            <person name="Coutinho L.L."/>
            <person name="Degrave W.M."/>
            <person name="Dellagostin O.A."/>
            <person name="El-Dorry H."/>
            <person name="Ferro E.S."/>
            <person name="Ferro M.I.T."/>
            <person name="Furlan L.R."/>
            <person name="Gamberini M."/>
            <person name="Giglioti E.A."/>
            <person name="Goes-Neto A."/>
            <person name="Goldman G.H."/>
            <person name="Goldman M.H.S."/>
            <person name="Harakava R."/>
            <person name="Jeronimo S.M.B."/>
            <person name="Junqueira-de-Azevedo I.L.M."/>
            <person name="Kimura E.T."/>
            <person name="Kuramae E.E."/>
            <person name="Lemos E.G.M."/>
            <person name="Lemos M.V.F."/>
            <person name="Marino C.L."/>
            <person name="Nunes L.R."/>
            <person name="de Oliveira R.C."/>
            <person name="Pereira G.G."/>
            <person name="Reis M.S."/>
            <person name="Schriefer A."/>
            <person name="Siqueira W.J."/>
            <person name="Sommer P."/>
            <person name="Tsai S.M."/>
            <person name="Simpson A.J.G."/>
            <person name="Ferro J.A."/>
            <person name="Camargo L.E.A."/>
            <person name="Kitajima J.P."/>
            <person name="Setubal J.C."/>
            <person name="Van Sluys M.A."/>
        </authorList>
    </citation>
    <scope>NUCLEOTIDE SEQUENCE [LARGE SCALE GENOMIC DNA]</scope>
    <source>
        <strain>Fiocruz L1-130</strain>
    </source>
</reference>
<protein>
    <recommendedName>
        <fullName evidence="1">NADH-quinone oxidoreductase subunit B</fullName>
        <ecNumber evidence="1">7.1.1.-</ecNumber>
    </recommendedName>
    <alternativeName>
        <fullName evidence="1">NADH dehydrogenase I subunit B</fullName>
    </alternativeName>
    <alternativeName>
        <fullName evidence="1">NDH-1 subunit B</fullName>
    </alternativeName>
</protein>